<keyword id="KW-0119">Carbohydrate metabolism</keyword>
<keyword id="KW-0961">Cell wall biogenesis/degradation</keyword>
<keyword id="KW-0325">Glycoprotein</keyword>
<keyword id="KW-0326">Glycosidase</keyword>
<keyword id="KW-0378">Hydrolase</keyword>
<keyword id="KW-0624">Polysaccharide degradation</keyword>
<keyword id="KW-0964">Secreted</keyword>
<keyword id="KW-0732">Signal</keyword>
<proteinExistence type="inferred from homology"/>
<comment type="function">
    <text evidence="1">Endogalactanase involved in the degradation of plant cell wall polysaccharides, and more particularly of hairy regions of pectin.</text>
</comment>
<comment type="catalytic activity">
    <reaction>
        <text>The enzyme specifically hydrolyzes (1-&gt;4)-beta-D-galactosidic linkages in type I arabinogalactans.</text>
        <dbReference type="EC" id="3.2.1.89"/>
    </reaction>
</comment>
<comment type="subcellular location">
    <subcellularLocation>
        <location evidence="1">Secreted</location>
    </subcellularLocation>
</comment>
<comment type="similarity">
    <text evidence="3">Belongs to the glycosyl hydrolase 53 family.</text>
</comment>
<comment type="sequence caution" evidence="3">
    <conflict type="erroneous initiation">
        <sequence resource="EMBL-CDS" id="EDP56027"/>
    </conflict>
    <text>Extended N-terminus.</text>
</comment>
<name>GANA_ASPFC</name>
<gene>
    <name type="primary">galA</name>
    <name type="ORF">AFUB_007290</name>
</gene>
<sequence length="356" mass="39132">MLGKTVLLPLLVLLCHSLASASLVYRGADISSLLIEEKAGIEYKNVNGQTQPLENILKANGVNSVRQRVWVNPSDGSYNLDYNVKLAKRVKAAGMSVYLDLHFSDTWADPSHQTTPRGWSTNDIGTLTWQVYNYTMEVCNTFASNGIDVSIVAIGNEIRNGLLWPLGKPDNYANIANILHSAAFGVKDSTLSPKPKIMIHLDNGWDWSAQKFFYDRVLSSGANLVKSDFDLIGVSYYPFYNPSATLSALTTSLKNLRSTYGKDVLVVETDWPVLCPNPAYAFPSDLKDIPFSVAGQTTFVQRVANIVAQTPGGIGLYYWEPAWVQNAALGSSCADNLMVDWSTRQARTSLSVFATI</sequence>
<reference key="1">
    <citation type="journal article" date="2008" name="PLoS Genet.">
        <title>Genomic islands in the pathogenic filamentous fungus Aspergillus fumigatus.</title>
        <authorList>
            <person name="Fedorova N.D."/>
            <person name="Khaldi N."/>
            <person name="Joardar V.S."/>
            <person name="Maiti R."/>
            <person name="Amedeo P."/>
            <person name="Anderson M.J."/>
            <person name="Crabtree J."/>
            <person name="Silva J.C."/>
            <person name="Badger J.H."/>
            <person name="Albarraq A."/>
            <person name="Angiuoli S."/>
            <person name="Bussey H."/>
            <person name="Bowyer P."/>
            <person name="Cotty P.J."/>
            <person name="Dyer P.S."/>
            <person name="Egan A."/>
            <person name="Galens K."/>
            <person name="Fraser-Liggett C.M."/>
            <person name="Haas B.J."/>
            <person name="Inman J.M."/>
            <person name="Kent R."/>
            <person name="Lemieux S."/>
            <person name="Malavazi I."/>
            <person name="Orvis J."/>
            <person name="Roemer T."/>
            <person name="Ronning C.M."/>
            <person name="Sundaram J.P."/>
            <person name="Sutton G."/>
            <person name="Turner G."/>
            <person name="Venter J.C."/>
            <person name="White O.R."/>
            <person name="Whitty B.R."/>
            <person name="Youngman P."/>
            <person name="Wolfe K.H."/>
            <person name="Goldman G.H."/>
            <person name="Wortman J.R."/>
            <person name="Jiang B."/>
            <person name="Denning D.W."/>
            <person name="Nierman W.C."/>
        </authorList>
    </citation>
    <scope>NUCLEOTIDE SEQUENCE [LARGE SCALE GENOMIC DNA]</scope>
    <source>
        <strain>CBS 144.89 / FGSC A1163 / CEA10</strain>
    </source>
</reference>
<feature type="signal peptide" evidence="2">
    <location>
        <begin position="1"/>
        <end position="21"/>
    </location>
</feature>
<feature type="chain" id="PRO_0000394944" description="Probable arabinogalactan endo-beta-1,4-galactanase A">
    <location>
        <begin position="22"/>
        <end position="356"/>
    </location>
</feature>
<feature type="active site" description="Proton donor" evidence="1">
    <location>
        <position position="157"/>
    </location>
</feature>
<feature type="active site" description="Nucleophile" evidence="1">
    <location>
        <position position="268"/>
    </location>
</feature>
<feature type="glycosylation site" description="N-linked (GlcNAc...) asparagine" evidence="2">
    <location>
        <position position="133"/>
    </location>
</feature>
<accession>B0XPR3</accession>
<organism>
    <name type="scientific">Aspergillus fumigatus (strain CBS 144.89 / FGSC A1163 / CEA10)</name>
    <name type="common">Neosartorya fumigata</name>
    <dbReference type="NCBI Taxonomy" id="451804"/>
    <lineage>
        <taxon>Eukaryota</taxon>
        <taxon>Fungi</taxon>
        <taxon>Dikarya</taxon>
        <taxon>Ascomycota</taxon>
        <taxon>Pezizomycotina</taxon>
        <taxon>Eurotiomycetes</taxon>
        <taxon>Eurotiomycetidae</taxon>
        <taxon>Eurotiales</taxon>
        <taxon>Aspergillaceae</taxon>
        <taxon>Aspergillus</taxon>
        <taxon>Aspergillus subgen. Fumigati</taxon>
    </lineage>
</organism>
<dbReference type="EC" id="3.2.1.89"/>
<dbReference type="EMBL" id="DS499594">
    <property type="protein sequence ID" value="EDP56027.1"/>
    <property type="status" value="ALT_INIT"/>
    <property type="molecule type" value="Genomic_DNA"/>
</dbReference>
<dbReference type="SMR" id="B0XPR3"/>
<dbReference type="GlyCosmos" id="B0XPR3">
    <property type="glycosylation" value="1 site, No reported glycans"/>
</dbReference>
<dbReference type="OrthoDB" id="71512at5052"/>
<dbReference type="PhylomeDB" id="B0XPR3"/>
<dbReference type="Proteomes" id="UP000001699">
    <property type="component" value="Unassembled WGS sequence"/>
</dbReference>
<dbReference type="GO" id="GO:0005576">
    <property type="term" value="C:extracellular region"/>
    <property type="evidence" value="ECO:0000250"/>
    <property type="project" value="UniProtKB"/>
</dbReference>
<dbReference type="GO" id="GO:0031218">
    <property type="term" value="F:arabinogalactan endo-1,4-beta-galactosidase activity"/>
    <property type="evidence" value="ECO:0000250"/>
    <property type="project" value="UniProtKB"/>
</dbReference>
<dbReference type="GO" id="GO:0015926">
    <property type="term" value="F:glucosidase activity"/>
    <property type="evidence" value="ECO:0007669"/>
    <property type="project" value="InterPro"/>
</dbReference>
<dbReference type="GO" id="GO:0071555">
    <property type="term" value="P:cell wall organization"/>
    <property type="evidence" value="ECO:0007669"/>
    <property type="project" value="UniProtKB-KW"/>
</dbReference>
<dbReference type="GO" id="GO:0045490">
    <property type="term" value="P:pectin catabolic process"/>
    <property type="evidence" value="ECO:0000250"/>
    <property type="project" value="UniProtKB"/>
</dbReference>
<dbReference type="FunFam" id="3.20.20.80:FF:000077">
    <property type="entry name" value="Arabinogalactan endo-beta-1,4-galactanase"/>
    <property type="match status" value="1"/>
</dbReference>
<dbReference type="Gene3D" id="3.20.20.80">
    <property type="entry name" value="Glycosidases"/>
    <property type="match status" value="1"/>
</dbReference>
<dbReference type="InterPro" id="IPR011683">
    <property type="entry name" value="Glyco_hydro_53"/>
</dbReference>
<dbReference type="InterPro" id="IPR017853">
    <property type="entry name" value="Glycoside_hydrolase_SF"/>
</dbReference>
<dbReference type="PANTHER" id="PTHR34983">
    <property type="entry name" value="ARABINOGALACTAN ENDO-BETA-1,4-GALACTANASE A"/>
    <property type="match status" value="1"/>
</dbReference>
<dbReference type="PANTHER" id="PTHR34983:SF1">
    <property type="entry name" value="ARABINOGALACTAN ENDO-BETA-1,4-GALACTANASE A"/>
    <property type="match status" value="1"/>
</dbReference>
<dbReference type="Pfam" id="PF07745">
    <property type="entry name" value="Glyco_hydro_53"/>
    <property type="match status" value="1"/>
</dbReference>
<dbReference type="SUPFAM" id="SSF51445">
    <property type="entry name" value="(Trans)glycosidases"/>
    <property type="match status" value="1"/>
</dbReference>
<protein>
    <recommendedName>
        <fullName>Probable arabinogalactan endo-beta-1,4-galactanase A</fullName>
        <ecNumber>3.2.1.89</ecNumber>
    </recommendedName>
    <alternativeName>
        <fullName>Endo-1,4-beta-galactanase A</fullName>
        <shortName>Galactanase A</shortName>
    </alternativeName>
</protein>
<evidence type="ECO:0000250" key="1"/>
<evidence type="ECO:0000255" key="2"/>
<evidence type="ECO:0000305" key="3"/>